<accession>A5CM68</accession>
<keyword id="KW-0963">Cytoplasm</keyword>
<keyword id="KW-0378">Hydrolase</keyword>
<keyword id="KW-0645">Protease</keyword>
<keyword id="KW-0788">Thiol protease</keyword>
<reference key="1">
    <citation type="journal article" date="2008" name="J. Bacteriol.">
        <title>The genome sequence of the tomato-pathogenic actinomycete Clavibacter michiganensis subsp. michiganensis NCPPB382 reveals a large island involved in pathogenicity.</title>
        <authorList>
            <person name="Gartemann K.-H."/>
            <person name="Abt B."/>
            <person name="Bekel T."/>
            <person name="Burger A."/>
            <person name="Engemann J."/>
            <person name="Fluegel M."/>
            <person name="Gaigalat L."/>
            <person name="Goesmann A."/>
            <person name="Graefen I."/>
            <person name="Kalinowski J."/>
            <person name="Kaup O."/>
            <person name="Kirchner O."/>
            <person name="Krause L."/>
            <person name="Linke B."/>
            <person name="McHardy A."/>
            <person name="Meyer F."/>
            <person name="Pohle S."/>
            <person name="Rueckert C."/>
            <person name="Schneiker S."/>
            <person name="Zellermann E.-M."/>
            <person name="Puehler A."/>
            <person name="Eichenlaub R."/>
            <person name="Kaiser O."/>
            <person name="Bartels D."/>
        </authorList>
    </citation>
    <scope>NUCLEOTIDE SEQUENCE [LARGE SCALE GENOMIC DNA]</scope>
    <source>
        <strain>NCPPB 382</strain>
    </source>
</reference>
<gene>
    <name evidence="1" type="primary">pcp</name>
    <name type="ordered locus">CMM_0133</name>
</gene>
<feature type="chain" id="PRO_1000050125" description="Pyrrolidone-carboxylate peptidase">
    <location>
        <begin position="1"/>
        <end position="213"/>
    </location>
</feature>
<feature type="active site" evidence="1">
    <location>
        <position position="80"/>
    </location>
</feature>
<feature type="active site" evidence="1">
    <location>
        <position position="143"/>
    </location>
</feature>
<feature type="active site" evidence="1">
    <location>
        <position position="166"/>
    </location>
</feature>
<name>PCP_CLAM3</name>
<comment type="function">
    <text evidence="1">Removes 5-oxoproline from various penultimate amino acid residues except L-proline.</text>
</comment>
<comment type="catalytic activity">
    <reaction evidence="1">
        <text>Release of an N-terminal pyroglutamyl group from a polypeptide, the second amino acid generally not being Pro.</text>
        <dbReference type="EC" id="3.4.19.3"/>
    </reaction>
</comment>
<comment type="subunit">
    <text evidence="1">Homotetramer.</text>
</comment>
<comment type="subcellular location">
    <subcellularLocation>
        <location evidence="1">Cytoplasm</location>
    </subcellularLocation>
</comment>
<comment type="similarity">
    <text evidence="1">Belongs to the peptidase C15 family.</text>
</comment>
<evidence type="ECO:0000255" key="1">
    <source>
        <dbReference type="HAMAP-Rule" id="MF_00417"/>
    </source>
</evidence>
<proteinExistence type="inferred from homology"/>
<protein>
    <recommendedName>
        <fullName evidence="1">Pyrrolidone-carboxylate peptidase</fullName>
        <ecNumber evidence="1">3.4.19.3</ecNumber>
    </recommendedName>
    <alternativeName>
        <fullName evidence="1">5-oxoprolyl-peptidase</fullName>
    </alternativeName>
    <alternativeName>
        <fullName evidence="1">Pyroglutamyl-peptidase I</fullName>
        <shortName evidence="1">PGP-I</shortName>
        <shortName evidence="1">Pyrase</shortName>
    </alternativeName>
</protein>
<sequence>MPTVLLTGFEPFDGDTSNPSWTAVQEVRDRWDGDAEIQVRQLPVDFAKVDDALRAALAEVDPDVVISVGLAGGIETLEVERVAINVDDARIPDNTGFQPIDEPVVDGGPAAYFSTLPIKAAVAAVRTKGIPAVVSQTAGTYTCNHVFYLLMHELRDRPGTRGGFVHIPYSTEEAIGTDRPYMRMDQLATALTAVVRATLANATDVKVGSGSLD</sequence>
<organism>
    <name type="scientific">Clavibacter michiganensis subsp. michiganensis (strain NCPPB 382)</name>
    <dbReference type="NCBI Taxonomy" id="443906"/>
    <lineage>
        <taxon>Bacteria</taxon>
        <taxon>Bacillati</taxon>
        <taxon>Actinomycetota</taxon>
        <taxon>Actinomycetes</taxon>
        <taxon>Micrococcales</taxon>
        <taxon>Microbacteriaceae</taxon>
        <taxon>Clavibacter</taxon>
    </lineage>
</organism>
<dbReference type="EC" id="3.4.19.3" evidence="1"/>
<dbReference type="EMBL" id="AM711867">
    <property type="protein sequence ID" value="CAN00153.1"/>
    <property type="molecule type" value="Genomic_DNA"/>
</dbReference>
<dbReference type="RefSeq" id="WP_011931352.1">
    <property type="nucleotide sequence ID" value="NC_009480.1"/>
</dbReference>
<dbReference type="SMR" id="A5CM68"/>
<dbReference type="MEROPS" id="C15.001"/>
<dbReference type="KEGG" id="cmi:CMM_0133"/>
<dbReference type="eggNOG" id="COG2039">
    <property type="taxonomic scope" value="Bacteria"/>
</dbReference>
<dbReference type="HOGENOM" id="CLU_043960_4_0_11"/>
<dbReference type="OrthoDB" id="9779738at2"/>
<dbReference type="Proteomes" id="UP000001564">
    <property type="component" value="Chromosome"/>
</dbReference>
<dbReference type="GO" id="GO:0005829">
    <property type="term" value="C:cytosol"/>
    <property type="evidence" value="ECO:0007669"/>
    <property type="project" value="InterPro"/>
</dbReference>
<dbReference type="GO" id="GO:0016920">
    <property type="term" value="F:pyroglutamyl-peptidase activity"/>
    <property type="evidence" value="ECO:0007669"/>
    <property type="project" value="UniProtKB-UniRule"/>
</dbReference>
<dbReference type="GO" id="GO:0006508">
    <property type="term" value="P:proteolysis"/>
    <property type="evidence" value="ECO:0007669"/>
    <property type="project" value="UniProtKB-KW"/>
</dbReference>
<dbReference type="CDD" id="cd00501">
    <property type="entry name" value="Peptidase_C15"/>
    <property type="match status" value="1"/>
</dbReference>
<dbReference type="FunFam" id="3.40.630.20:FF:000001">
    <property type="entry name" value="Pyrrolidone-carboxylate peptidase"/>
    <property type="match status" value="1"/>
</dbReference>
<dbReference type="Gene3D" id="3.40.630.20">
    <property type="entry name" value="Peptidase C15, pyroglutamyl peptidase I-like"/>
    <property type="match status" value="1"/>
</dbReference>
<dbReference type="HAMAP" id="MF_00417">
    <property type="entry name" value="Pyrrolid_peptidase"/>
    <property type="match status" value="1"/>
</dbReference>
<dbReference type="InterPro" id="IPR000816">
    <property type="entry name" value="Peptidase_C15"/>
</dbReference>
<dbReference type="InterPro" id="IPR016125">
    <property type="entry name" value="Peptidase_C15-like"/>
</dbReference>
<dbReference type="InterPro" id="IPR036440">
    <property type="entry name" value="Peptidase_C15-like_sf"/>
</dbReference>
<dbReference type="InterPro" id="IPR029762">
    <property type="entry name" value="PGP-I_bact-type"/>
</dbReference>
<dbReference type="NCBIfam" id="NF009676">
    <property type="entry name" value="PRK13197.1"/>
    <property type="match status" value="1"/>
</dbReference>
<dbReference type="NCBIfam" id="TIGR00504">
    <property type="entry name" value="pyro_pdase"/>
    <property type="match status" value="1"/>
</dbReference>
<dbReference type="PANTHER" id="PTHR23402">
    <property type="entry name" value="PROTEASE FAMILY C15 PYROGLUTAMYL-PEPTIDASE I-RELATED"/>
    <property type="match status" value="1"/>
</dbReference>
<dbReference type="PANTHER" id="PTHR23402:SF1">
    <property type="entry name" value="PYROGLUTAMYL-PEPTIDASE I"/>
    <property type="match status" value="1"/>
</dbReference>
<dbReference type="Pfam" id="PF01470">
    <property type="entry name" value="Peptidase_C15"/>
    <property type="match status" value="1"/>
</dbReference>
<dbReference type="PIRSF" id="PIRSF015592">
    <property type="entry name" value="Prld-crbxl_pptds"/>
    <property type="match status" value="1"/>
</dbReference>
<dbReference type="PRINTS" id="PR00706">
    <property type="entry name" value="PYROGLUPTASE"/>
</dbReference>
<dbReference type="SUPFAM" id="SSF53182">
    <property type="entry name" value="Pyrrolidone carboxyl peptidase (pyroglutamate aminopeptidase)"/>
    <property type="match status" value="1"/>
</dbReference>